<organism>
    <name type="scientific">Toxoplasma gondii (strain ATCC 50861 / VEG)</name>
    <dbReference type="NCBI Taxonomy" id="432359"/>
    <lineage>
        <taxon>Eukaryota</taxon>
        <taxon>Sar</taxon>
        <taxon>Alveolata</taxon>
        <taxon>Apicomplexa</taxon>
        <taxon>Conoidasida</taxon>
        <taxon>Coccidia</taxon>
        <taxon>Eucoccidiorida</taxon>
        <taxon>Eimeriorina</taxon>
        <taxon>Sarcocystidae</taxon>
        <taxon>Toxoplasma</taxon>
    </lineage>
</organism>
<comment type="function">
    <text evidence="3 4 5 6 7 8 10 11 15">Essential microneme protein that plays an important role in host cell invasion. Part of the moving junction (MJ) complex, a ringlike structure formed between the plasma membranes of the apical tip of the parasite and the target host cell. During invasion, the MJ migrates from the anterior to the posterior of the parasite, leading to internalization of the parasite into a parasitophorous vacuole (PV).</text>
</comment>
<comment type="subunit">
    <text evidence="7 8 12 14">Component of the moving junction (MJ) complex, composed of AMA1, a transmembrane protein on the parasite surface, and a complex of the rhoptry neck proteins RON2, RON4, RON5 and RON8 localized to the cytoplasmic face of the host plasma membrane. Interacts (via ectodomain) with RON2 (via C-terminus); RON2 serves as the receptor for AMA1 on the host plasma membrane. AMA1 and the RON proteins are initially in distinct compartments within the parasite, namely the micronemes and the rhoptries, and interaction happens only upon initiation of invasion when the micronemes and rhoptries discharge.</text>
</comment>
<comment type="subcellular location">
    <subcellularLocation>
        <location evidence="16">Cell membrane</location>
        <topology evidence="16">Single-pass type I membrane protein</topology>
    </subcellularLocation>
    <subcellularLocation>
        <location evidence="3 4 6 7">Secreted</location>
    </subcellularLocation>
    <text>Initially localizes to micronemes, specialized secretory organelles of apicomplexan parasites important for host cell invasion. Relocalizes to the surface membrane upon host invasion by tachyzoites. Found predominantly on the apical end of the parasite surface. A cleavage product of the large ectodomain is released into the medium by extracellular parasites.</text>
</comment>
<comment type="PTM">
    <text evidence="6 10">Proteolytically cleaved during invasion within its transmembrane domain, releasing a soluble form from the tachyzoite surface. The cytosolic tail generated by ROM4 cleavage during invasion may trigger parasite replication within the parasitophorous vacuole.</text>
</comment>
<comment type="disruption phenotype">
    <text evidence="5">Severely compromises the parasite in its ability to invade host cells. Inhibits secretion of the rhoptries, organelles whose discharge is coupled to active host cell penetration.</text>
</comment>
<comment type="similarity">
    <text evidence="16">Belongs to the apicomplexan parasites AMA1 family.</text>
</comment>
<comment type="caution">
    <text evidence="16">PubMed:21205639 reported that AMA1 may also be involved in a signaling pathway leading to replication. However, PubMed:22523242 refutes this model.</text>
</comment>
<protein>
    <recommendedName>
        <fullName>Apical membrane antigen 1</fullName>
        <shortName>TgAMA-1</shortName>
        <shortName>TgAMA1</shortName>
    </recommendedName>
    <component>
        <recommendedName>
            <fullName>Apical membrane antigen 1, soluble form</fullName>
        </recommendedName>
    </component>
</protein>
<gene>
    <name type="primary">AMA1</name>
    <name type="ORF">TGVEG_255260</name>
</gene>
<evidence type="ECO:0000255" key="1"/>
<evidence type="ECO:0000256" key="2">
    <source>
        <dbReference type="SAM" id="MobiDB-lite"/>
    </source>
</evidence>
<evidence type="ECO:0000269" key="3">
    <source>
    </source>
</evidence>
<evidence type="ECO:0000269" key="4">
    <source>
    </source>
</evidence>
<evidence type="ECO:0000269" key="5">
    <source>
    </source>
</evidence>
<evidence type="ECO:0000269" key="6">
    <source>
    </source>
</evidence>
<evidence type="ECO:0000269" key="7">
    <source>
    </source>
</evidence>
<evidence type="ECO:0000269" key="8">
    <source>
    </source>
</evidence>
<evidence type="ECO:0000269" key="9">
    <source>
    </source>
</evidence>
<evidence type="ECO:0000269" key="10">
    <source>
    </source>
</evidence>
<evidence type="ECO:0000269" key="11">
    <source>
    </source>
</evidence>
<evidence type="ECO:0000269" key="12">
    <source>
    </source>
</evidence>
<evidence type="ECO:0000269" key="13">
    <source>
    </source>
</evidence>
<evidence type="ECO:0000269" key="14">
    <source>
    </source>
</evidence>
<evidence type="ECO:0000269" key="15">
    <source>
    </source>
</evidence>
<evidence type="ECO:0000305" key="16"/>
<evidence type="ECO:0007829" key="17">
    <source>
        <dbReference type="PDB" id="2X2Z"/>
    </source>
</evidence>
<evidence type="ECO:0007829" key="18">
    <source>
        <dbReference type="PDB" id="2Y8R"/>
    </source>
</evidence>
<evidence type="ECO:0007829" key="19">
    <source>
        <dbReference type="PDB" id="2Y8S"/>
    </source>
</evidence>
<evidence type="ECO:0007829" key="20">
    <source>
        <dbReference type="PDB" id="2Y8T"/>
    </source>
</evidence>
<dbReference type="EMBL" id="AAYL02000028">
    <property type="protein sequence ID" value="ESS35482.1"/>
    <property type="molecule type" value="Genomic_DNA"/>
</dbReference>
<dbReference type="EMBL" id="AF010264">
    <property type="protein sequence ID" value="AAB65410.1"/>
    <property type="molecule type" value="mRNA"/>
</dbReference>
<dbReference type="PDB" id="2X2Z">
    <property type="method" value="X-ray"/>
    <property type="resolution" value="2.00 A"/>
    <property type="chains" value="A/B/D/E=64-519"/>
</dbReference>
<dbReference type="PDB" id="2Y8R">
    <property type="method" value="X-ray"/>
    <property type="resolution" value="2.45 A"/>
    <property type="chains" value="A/B/D/E=64-484"/>
</dbReference>
<dbReference type="PDB" id="2Y8S">
    <property type="method" value="X-ray"/>
    <property type="resolution" value="2.55 A"/>
    <property type="chains" value="A/D=64-484"/>
</dbReference>
<dbReference type="PDB" id="2Y8T">
    <property type="method" value="X-ray"/>
    <property type="resolution" value="1.95 A"/>
    <property type="chains" value="A/D=64-484"/>
</dbReference>
<dbReference type="PDBsum" id="2X2Z"/>
<dbReference type="PDBsum" id="2Y8R"/>
<dbReference type="PDBsum" id="2Y8S"/>
<dbReference type="PDBsum" id="2Y8T"/>
<dbReference type="SMR" id="B6KAM0"/>
<dbReference type="STRING" id="432359.B6KAM0"/>
<dbReference type="GlyCosmos" id="B6KAM0">
    <property type="glycosylation" value="1 site, No reported glycans"/>
</dbReference>
<dbReference type="iPTMnet" id="B6KAM0"/>
<dbReference type="SwissPalm" id="B6KAM0"/>
<dbReference type="PaxDb" id="5811-TGME49_055260"/>
<dbReference type="EnsemblProtists" id="ESS35482">
    <property type="protein sequence ID" value="ESS35482"/>
    <property type="gene ID" value="TGVEG_255260"/>
</dbReference>
<dbReference type="EnsemblProtists" id="TGME49_255260-t26_1">
    <property type="protein sequence ID" value="TGME49_255260-t26_1"/>
    <property type="gene ID" value="TGME49_255260"/>
</dbReference>
<dbReference type="VEuPathDB" id="ToxoDB:TGVEG_255260"/>
<dbReference type="eggNOG" id="ENOG502QYHF">
    <property type="taxonomic scope" value="Eukaryota"/>
</dbReference>
<dbReference type="OMA" id="LMGERYC"/>
<dbReference type="EvolutionaryTrace" id="B6KAM0"/>
<dbReference type="Proteomes" id="UP000002226">
    <property type="component" value="Partially assembled WGS sequence"/>
</dbReference>
<dbReference type="GO" id="GO:0005576">
    <property type="term" value="C:extracellular region"/>
    <property type="evidence" value="ECO:0007669"/>
    <property type="project" value="UniProtKB-SubCell"/>
</dbReference>
<dbReference type="GO" id="GO:0005886">
    <property type="term" value="C:plasma membrane"/>
    <property type="evidence" value="ECO:0007669"/>
    <property type="project" value="UniProtKB-SubCell"/>
</dbReference>
<dbReference type="Gene3D" id="2.10.70.70">
    <property type="match status" value="1"/>
</dbReference>
<dbReference type="Gene3D" id="3.50.4.10">
    <property type="entry name" value="Hepatocyte Growth Factor"/>
    <property type="match status" value="2"/>
</dbReference>
<dbReference type="InterPro" id="IPR003298">
    <property type="entry name" value="Apmem_Ag1"/>
</dbReference>
<dbReference type="Pfam" id="PF02430">
    <property type="entry name" value="AMA-1"/>
    <property type="match status" value="1"/>
</dbReference>
<dbReference type="PRINTS" id="PR01361">
    <property type="entry name" value="MEROZOITESA"/>
</dbReference>
<dbReference type="SMART" id="SM00815">
    <property type="entry name" value="AMA-1"/>
    <property type="match status" value="1"/>
</dbReference>
<accession>B6KAM0</accession>
<accession>B9QC59</accession>
<accession>O15681</accession>
<accession>V4ZTW1</accession>
<reference key="1">
    <citation type="submission" date="2008-03" db="EMBL/GenBank/DDBJ databases">
        <title>Annotation of Toxoplasma gondii VEG.</title>
        <authorList>
            <person name="Lorenzi H."/>
            <person name="Inman J."/>
            <person name="Amedeo P."/>
            <person name="Brunk B."/>
            <person name="Roos D."/>
            <person name="Caler E."/>
        </authorList>
    </citation>
    <scope>NUCLEOTIDE SEQUENCE [LARGE SCALE GENOMIC DNA]</scope>
    <source>
        <strain>ATCC 50861 / VEG</strain>
    </source>
</reference>
<reference key="2">
    <citation type="journal article" date="2000" name="Infect. Immun.">
        <title>Toxoplasma gondii homologue of plasmodium apical membrane antigen 1 is involved in invasion of host cells.</title>
        <authorList>
            <person name="Hehl A.B."/>
            <person name="Lekutis C."/>
            <person name="Grigg M.E."/>
            <person name="Bradley P.J."/>
            <person name="Dubremetz J.F."/>
            <person name="Ortega-Barria E."/>
            <person name="Boothroyd J.C."/>
        </authorList>
    </citation>
    <scope>NUCLEOTIDE SEQUENCE [MRNA] OF 29-569</scope>
    <scope>FUNCTION</scope>
    <scope>SUBCELLULAR LOCATION</scope>
    <source>
        <strain>ATCC 50611 / Me49</strain>
    </source>
</reference>
<reference key="3">
    <citation type="journal article" date="2005" name="Mol. Microbiol.">
        <title>Distinct mechanisms govern proteolytic shedding of a key invasion protein in apicomplexan pathogens.</title>
        <authorList>
            <person name="Howell S.A."/>
            <person name="Hackett F."/>
            <person name="Jongco A.M."/>
            <person name="Withers-Martinez C."/>
            <person name="Kim K."/>
            <person name="Carruthers V.B."/>
            <person name="Blackman M.J."/>
        </authorList>
    </citation>
    <scope>PROTEIN SEQUENCE OF 67-72 AND 482-487</scope>
    <scope>PROTEOLYTIC PROCESSING</scope>
    <scope>FUNCTION</scope>
    <scope>SUBCELLULAR LOCATION</scope>
</reference>
<reference key="4">
    <citation type="journal article" date="2000" name="Mol. Biochem. Parasitol.">
        <title>The Toxoplasma homolog of Plasmodium apical membrane antigen-1 (AMA-1) is a microneme protein secreted in response to elevated intracellular calcium levels.</title>
        <authorList>
            <person name="Donahue C.G."/>
            <person name="Carruthers V.B."/>
            <person name="Gilk S.D."/>
            <person name="Ward G.E."/>
        </authorList>
    </citation>
    <scope>FUNCTION</scope>
    <scope>SUBCELLULAR LOCATION</scope>
</reference>
<reference key="5">
    <citation type="journal article" date="2005" name="Mol. Biol. Cell">
        <title>Conditional expression of Toxoplasma gondii apical membrane antigen-1 (TgAMA1) demonstrates that TgAMA1 plays a critical role in host cell invasion.</title>
        <authorList>
            <person name="Mital J."/>
            <person name="Meissner M."/>
            <person name="Soldati D."/>
            <person name="Ward G.E."/>
        </authorList>
    </citation>
    <scope>FUNCTION</scope>
    <scope>DISRUPTION PHENOTYPE</scope>
</reference>
<reference key="6">
    <citation type="journal article" date="2005" name="PLoS Pathog.">
        <title>Identification of the moving junction complex of Toxoplasma gondii: a collaboration between distinct secretory organelles.</title>
        <authorList>
            <person name="Alexander D.L."/>
            <person name="Mital J."/>
            <person name="Ward G.E."/>
            <person name="Bradley P."/>
            <person name="Boothroyd J.C."/>
        </authorList>
    </citation>
    <scope>FUNCTION</scope>
    <scope>INTERACTION WITH RON2; RON4 AND RON5</scope>
    <scope>SUBCELLULAR LOCATION</scope>
</reference>
<reference key="7">
    <citation type="journal article" date="2009" name="PLoS Pathog.">
        <title>Export of a Toxoplasma gondii rhoptry neck protein complex at the host cell membrane to form the moving junction during invasion.</title>
        <authorList>
            <person name="Besteiro S."/>
            <person name="Michelin A."/>
            <person name="Poncet J."/>
            <person name="Dubremetz J.F."/>
            <person name="Lebrun M."/>
        </authorList>
    </citation>
    <scope>FUNCTION</scope>
    <scope>IDENTIFICATION IN THE MJ COMPLEX</scope>
    <scope>INTERACTION WITH RON2</scope>
</reference>
<reference key="8">
    <citation type="journal article" date="2010" name="PLoS Pathog.">
        <title>Rhomboid 4 (ROM4) affects the processing of surface adhesins and facilitates host cell invasion by Toxoplasma gondii.</title>
        <authorList>
            <person name="Buguliskis J.S."/>
            <person name="Brossier F."/>
            <person name="Shuman J."/>
            <person name="Sibley L.D."/>
        </authorList>
    </citation>
    <scope>FUNCTION</scope>
    <scope>CLEAVAGE BY ROM4</scope>
</reference>
<reference key="9">
    <citation type="journal article" date="2011" name="PLoS Pathog.">
        <title>The C-terminus of Toxoplasma RON2 provides the crucial link between AMA1 and the host-associated invasion complex.</title>
        <authorList>
            <person name="Tyler J.S."/>
            <person name="Boothroyd J.C."/>
        </authorList>
    </citation>
    <scope>INTERACTION WITH RON2</scope>
</reference>
<reference key="10">
    <citation type="journal article" date="2011" name="Science">
        <title>Intramembrane cleavage of AMA1 triggers Toxoplasma to switch from an invasive to a replicative mode.</title>
        <authorList>
            <person name="Santos J.M."/>
            <person name="Ferguson D.J."/>
            <person name="Blackman M.J."/>
            <person name="Soldati-Favre D."/>
        </authorList>
    </citation>
    <scope>FUNCTION</scope>
    <scope>MUTAGENESIS OF 547-PHE-TRP-548 AND 568-ASP-TYR-569</scope>
</reference>
<reference key="11">
    <citation type="journal article" date="2011" name="Traffic">
        <title>Forward targeting of Toxoplasma gondii proproteins to the micronemes involves conserved aliphatic amino acids.</title>
        <authorList>
            <person name="Gaji R.Y."/>
            <person name="Flammer H.P."/>
            <person name="Carruthers V.B."/>
        </authorList>
    </citation>
    <scope>MUTAGENESIS OF LEU-51</scope>
</reference>
<reference key="12">
    <citation type="journal article" date="2012" name="Proc. Natl. Acad. Sci. U.S.A.">
        <title>Intramembrane proteolysis of Toxoplasma apical membrane antigen 1 facilitates host-cell invasion but is dispensable for replication.</title>
        <authorList>
            <person name="Parussini F."/>
            <person name="Tang Q."/>
            <person name="Moin S.M."/>
            <person name="Mital J."/>
            <person name="Urban S."/>
            <person name="Ward G.E."/>
        </authorList>
    </citation>
    <scope>FUNCTION</scope>
    <scope>MUTAGENESIS OF 487-ALA-GLY-488; LEU-489 AND 492-GLY-GLY-493</scope>
</reference>
<reference key="13">
    <citation type="journal article" date="2010" name="J. Biol. Chem.">
        <title>Structural characterization of apical membrane antigen 1 (AMA1) from Toxoplasma gondii.</title>
        <authorList>
            <person name="Crawford J."/>
            <person name="Tonkin M.L."/>
            <person name="Grujic O."/>
            <person name="Boulanger M.J."/>
        </authorList>
    </citation>
    <scope>X-RAY CRYSTALLOGRAPHY (2.00 ANGSTROMS) OF 64-519</scope>
    <scope>DISULFIDE BONDS</scope>
    <scope>GLYCOSYLATION AT ASN-86</scope>
</reference>
<reference key="14">
    <citation type="journal article" date="2011" name="Science">
        <title>Host cell invasion by apicomplexan parasites: insights from the co-structure of AMA1 with a RON2 peptide.</title>
        <authorList>
            <person name="Tonkin M.L."/>
            <person name="Roques M."/>
            <person name="Lamarque M.H."/>
            <person name="Pugniere M."/>
            <person name="Douguet D."/>
            <person name="Crawford J."/>
            <person name="Lebrun M."/>
            <person name="Boulanger M.J."/>
        </authorList>
    </citation>
    <scope>X-RAY CRYSTALLOGRAPHY (1.95 ANGSTROMS) OF 64-484 IN COMPLEX WITH RON2</scope>
    <scope>DISULFIDE BONDS</scope>
    <scope>MUTAGENESIS OF TYR-213</scope>
</reference>
<name>AMA1_TOXGV</name>
<proteinExistence type="evidence at protein level"/>
<keyword id="KW-0002">3D-structure</keyword>
<keyword id="KW-1003">Cell membrane</keyword>
<keyword id="KW-0903">Direct protein sequencing</keyword>
<keyword id="KW-1015">Disulfide bond</keyword>
<keyword id="KW-0325">Glycoprotein</keyword>
<keyword id="KW-0472">Membrane</keyword>
<keyword id="KW-1185">Reference proteome</keyword>
<keyword id="KW-0964">Secreted</keyword>
<keyword id="KW-0732">Signal</keyword>
<keyword id="KW-1137">Tachyzoite</keyword>
<keyword id="KW-0812">Transmembrane</keyword>
<keyword id="KW-1133">Transmembrane helix</keyword>
<feature type="signal peptide" evidence="1">
    <location>
        <begin position="1"/>
        <end position="48"/>
    </location>
</feature>
<feature type="propeptide" id="PRO_0000421959" description="Removed in mature form; required for microneme targeting of the proprotein" evidence="6">
    <location>
        <begin position="49"/>
        <end position="66"/>
    </location>
</feature>
<feature type="chain" id="PRO_0000421960" description="Apical membrane antigen 1">
    <location>
        <begin position="67"/>
        <end position="569"/>
    </location>
</feature>
<feature type="chain" id="PRO_0000421961" description="Apical membrane antigen 1, soluble form">
    <location>
        <begin position="67"/>
        <end position="487"/>
    </location>
</feature>
<feature type="topological domain" description="Extracellular" evidence="1">
    <location>
        <begin position="49"/>
        <end position="483"/>
    </location>
</feature>
<feature type="transmembrane region" description="Helical" evidence="1">
    <location>
        <begin position="484"/>
        <end position="504"/>
    </location>
</feature>
<feature type="topological domain" description="Cytoplasmic" evidence="1">
    <location>
        <begin position="505"/>
        <end position="569"/>
    </location>
</feature>
<feature type="region of interest" description="DI">
    <location>
        <begin position="67"/>
        <end position="287"/>
    </location>
</feature>
<feature type="region of interest" description="DII">
    <location>
        <begin position="288"/>
        <end position="415"/>
    </location>
</feature>
<feature type="region of interest" description="DIII">
    <location>
        <begin position="416"/>
        <end position="487"/>
    </location>
</feature>
<feature type="region of interest" description="Disordered" evidence="2">
    <location>
        <begin position="518"/>
        <end position="548"/>
    </location>
</feature>
<feature type="compositionally biased region" description="Basic and acidic residues" evidence="2">
    <location>
        <begin position="518"/>
        <end position="530"/>
    </location>
</feature>
<feature type="site" description="Cleavage; by rhomboid protease ROM4">
    <location>
        <begin position="487"/>
        <end position="488"/>
    </location>
</feature>
<feature type="glycosylation site" description="N-linked (GlcNAc...) asparagine" evidence="9">
    <location>
        <position position="86"/>
    </location>
</feature>
<feature type="disulfide bond">
    <location>
        <begin position="117"/>
        <end position="286"/>
    </location>
</feature>
<feature type="disulfide bond">
    <location>
        <begin position="194"/>
        <end position="226"/>
    </location>
</feature>
<feature type="disulfide bond">
    <location>
        <begin position="242"/>
        <end position="255"/>
    </location>
</feature>
<feature type="disulfide bond">
    <location>
        <begin position="304"/>
        <end position="393"/>
    </location>
</feature>
<feature type="disulfide bond">
    <location>
        <begin position="324"/>
        <end position="384"/>
    </location>
</feature>
<feature type="disulfide bond">
    <location>
        <begin position="435"/>
        <end position="459"/>
    </location>
</feature>
<feature type="disulfide bond">
    <location>
        <begin position="447"/>
        <end position="471"/>
    </location>
</feature>
<feature type="disulfide bond">
    <location>
        <begin position="452"/>
        <end position="479"/>
    </location>
</feature>
<feature type="mutagenesis site" description="Mislocalizes to the endosomal system." evidence="13">
    <original>L</original>
    <variation>K</variation>
    <location>
        <position position="51"/>
    </location>
</feature>
<feature type="mutagenesis site" description="Abolishes interaction with RON2." evidence="14">
    <original>Y</original>
    <variation>A</variation>
    <location>
        <position position="213"/>
    </location>
</feature>
<feature type="mutagenesis site" description="Reduces cleavage 30-fold. Uncleavable; when associated with 492-FF-493." evidence="15">
    <original>AG</original>
    <variation>FF</variation>
    <location>
        <begin position="487"/>
        <end position="488"/>
    </location>
</feature>
<feature type="mutagenesis site" description="Enhances cleavage 13-fold." evidence="15">
    <original>L</original>
    <variation>G</variation>
    <location>
        <position position="489"/>
    </location>
</feature>
<feature type="mutagenesis site" description="Minor effect on proteolysis. Uncleavable; when associated with 487-FF-488." evidence="15">
    <original>GG</original>
    <variation>FF</variation>
    <location>
        <begin position="492"/>
        <end position="493"/>
    </location>
</feature>
<feature type="mutagenesis site" description="Does not impair function." evidence="11">
    <original>FW</original>
    <variation>AA</variation>
    <location>
        <begin position="547"/>
        <end position="548"/>
    </location>
</feature>
<feature type="mutagenesis site" description="Does not impair function." evidence="11">
    <original>DY</original>
    <variation>AA</variation>
    <location>
        <begin position="568"/>
        <end position="569"/>
    </location>
</feature>
<feature type="sequence conflict" description="In Ref. 2; AAB65410." evidence="16" ref="2">
    <original>AS</original>
    <variation>QV</variation>
    <location>
        <begin position="35"/>
        <end position="36"/>
    </location>
</feature>
<feature type="sequence conflict" description="In Ref. 2; AAB65410." evidence="16" ref="2">
    <original>P</original>
    <variation>L</variation>
    <location>
        <position position="132"/>
    </location>
</feature>
<feature type="helix" evidence="20">
    <location>
        <begin position="71"/>
        <end position="73"/>
    </location>
</feature>
<feature type="helix" evidence="20">
    <location>
        <begin position="76"/>
        <end position="83"/>
    </location>
</feature>
<feature type="turn" evidence="20">
    <location>
        <begin position="87"/>
        <end position="91"/>
    </location>
</feature>
<feature type="strand" evidence="20">
    <location>
        <begin position="95"/>
        <end position="97"/>
    </location>
</feature>
<feature type="strand" evidence="20">
    <location>
        <begin position="101"/>
        <end position="105"/>
    </location>
</feature>
<feature type="strand" evidence="20">
    <location>
        <begin position="108"/>
        <end position="112"/>
    </location>
</feature>
<feature type="strand" evidence="18">
    <location>
        <begin position="119"/>
        <end position="121"/>
    </location>
</feature>
<feature type="strand" evidence="20">
    <location>
        <begin position="123"/>
        <end position="126"/>
    </location>
</feature>
<feature type="helix" evidence="20">
    <location>
        <begin position="145"/>
        <end position="151"/>
    </location>
</feature>
<feature type="strand" evidence="20">
    <location>
        <begin position="170"/>
        <end position="175"/>
    </location>
</feature>
<feature type="helix" evidence="20">
    <location>
        <begin position="176"/>
        <end position="180"/>
    </location>
</feature>
<feature type="helix" evidence="20">
    <location>
        <begin position="190"/>
        <end position="199"/>
    </location>
</feature>
<feature type="strand" evidence="20">
    <location>
        <begin position="201"/>
        <end position="204"/>
    </location>
</feature>
<feature type="strand" evidence="17">
    <location>
        <begin position="206"/>
        <end position="208"/>
    </location>
</feature>
<feature type="strand" evidence="17">
    <location>
        <begin position="210"/>
        <end position="214"/>
    </location>
</feature>
<feature type="strand" evidence="20">
    <location>
        <begin position="217"/>
        <end position="220"/>
    </location>
</feature>
<feature type="turn" evidence="20">
    <location>
        <begin position="221"/>
        <end position="224"/>
    </location>
</feature>
<feature type="strand" evidence="20">
    <location>
        <begin position="225"/>
        <end position="230"/>
    </location>
</feature>
<feature type="turn" evidence="20">
    <location>
        <begin position="239"/>
        <end position="241"/>
    </location>
</feature>
<feature type="strand" evidence="20">
    <location>
        <begin position="242"/>
        <end position="244"/>
    </location>
</feature>
<feature type="strand" evidence="19">
    <location>
        <begin position="247"/>
        <end position="250"/>
    </location>
</feature>
<feature type="strand" evidence="20">
    <location>
        <begin position="252"/>
        <end position="254"/>
    </location>
</feature>
<feature type="strand" evidence="20">
    <location>
        <begin position="256"/>
        <end position="259"/>
    </location>
</feature>
<feature type="strand" evidence="20">
    <location>
        <begin position="262"/>
        <end position="264"/>
    </location>
</feature>
<feature type="strand" evidence="20">
    <location>
        <begin position="268"/>
        <end position="271"/>
    </location>
</feature>
<feature type="helix" evidence="20">
    <location>
        <begin position="273"/>
        <end position="276"/>
    </location>
</feature>
<feature type="turn" evidence="20">
    <location>
        <begin position="279"/>
        <end position="281"/>
    </location>
</feature>
<feature type="helix" evidence="20">
    <location>
        <begin position="282"/>
        <end position="285"/>
    </location>
</feature>
<feature type="strand" evidence="20">
    <location>
        <begin position="291"/>
        <end position="300"/>
    </location>
</feature>
<feature type="strand" evidence="20">
    <location>
        <begin position="303"/>
        <end position="306"/>
    </location>
</feature>
<feature type="helix" evidence="20">
    <location>
        <begin position="307"/>
        <end position="309"/>
    </location>
</feature>
<feature type="strand" evidence="20">
    <location>
        <begin position="314"/>
        <end position="317"/>
    </location>
</feature>
<feature type="helix" evidence="20">
    <location>
        <begin position="321"/>
        <end position="330"/>
    </location>
</feature>
<feature type="strand" evidence="17">
    <location>
        <begin position="346"/>
        <end position="349"/>
    </location>
</feature>
<feature type="turn" evidence="20">
    <location>
        <begin position="353"/>
        <end position="357"/>
    </location>
</feature>
<feature type="strand" evidence="20">
    <location>
        <begin position="371"/>
        <end position="376"/>
    </location>
</feature>
<feature type="strand" evidence="20">
    <location>
        <begin position="382"/>
        <end position="389"/>
    </location>
</feature>
<feature type="strand" evidence="20">
    <location>
        <begin position="392"/>
        <end position="407"/>
    </location>
</feature>
<feature type="helix" evidence="20">
    <location>
        <begin position="415"/>
        <end position="417"/>
    </location>
</feature>
<feature type="helix" evidence="20">
    <location>
        <begin position="429"/>
        <end position="432"/>
    </location>
</feature>
<feature type="helix" evidence="20">
    <location>
        <begin position="437"/>
        <end position="439"/>
    </location>
</feature>
<feature type="turn" evidence="20">
    <location>
        <begin position="449"/>
        <end position="452"/>
    </location>
</feature>
<feature type="strand" evidence="20">
    <location>
        <begin position="453"/>
        <end position="460"/>
    </location>
</feature>
<feature type="strand" evidence="20">
    <location>
        <begin position="463"/>
        <end position="470"/>
    </location>
</feature>
<feature type="helix" evidence="20">
    <location>
        <begin position="473"/>
        <end position="478"/>
    </location>
</feature>
<sequence>MICSIMGGLRSLRAARPYSHQSNTETKHMGLVGVASLLVLVADCTIFASGLSSSTRSRESQTLSASTSGNPFQANVEMKTFMERFNLTHHHQSGIYVDLGQDKEVDGTLYREPAGLCPIWGKHIELQQPDRPPYRNNFLEDVPTEKEYKQSGNPLPGGFNLNFVTPSGQRISPFPMELLEKNSNIKASTDLGRCAEFAFKTVAMDKNNKATKYRYPFVYDSKKRLCHILYVSMQLMEGKKYCSVKGEPPDLTWYCFKPRKSVTENHHLIYGSAYVGENPDAFISKCPNQALRGYRFGVWKKGRCLDYTELTDTVIERVESKAQCWVKTFENDGVASDQPHTYPLTSQASWNDWWPLHQSDQPHSGGVGRNYGFYYVDTTGEGKCALSDQVPDCLVSDSAAVSYTAAGSLSEETPNFIIPSNPSVTPPTPETALQCTADKFPDSFGACDVQACKRQKTSCVGGQIQSTSVDCTADEQNECGSNTALIAGLAVGGVLLLALLGGGCYFAKRLDRNKGVQAAHHEHEFQSDRGARKKRPSDLMQEAEPSFWDEAEENIEQDGETHVMVEGDY</sequence>